<organism>
    <name type="scientific">Levilactobacillus brevis (strain ATCC 367 / BCRC 12310 / CIP 105137 / JCM 1170 / LMG 11437 / NCIMB 947 / NCTC 947)</name>
    <name type="common">Lactobacillus brevis</name>
    <dbReference type="NCBI Taxonomy" id="387344"/>
    <lineage>
        <taxon>Bacteria</taxon>
        <taxon>Bacillati</taxon>
        <taxon>Bacillota</taxon>
        <taxon>Bacilli</taxon>
        <taxon>Lactobacillales</taxon>
        <taxon>Lactobacillaceae</taxon>
        <taxon>Levilactobacillus</taxon>
    </lineage>
</organism>
<protein>
    <recommendedName>
        <fullName evidence="1">DNA-directed RNA polymerase subunit omega</fullName>
        <shortName evidence="1">RNAP omega subunit</shortName>
        <ecNumber evidence="1">2.7.7.6</ecNumber>
    </recommendedName>
    <alternativeName>
        <fullName evidence="1">RNA polymerase omega subunit</fullName>
    </alternativeName>
    <alternativeName>
        <fullName evidence="1">Transcriptase subunit omega</fullName>
    </alternativeName>
</protein>
<proteinExistence type="inferred from homology"/>
<name>RPOZ_LEVBA</name>
<keyword id="KW-0240">DNA-directed RNA polymerase</keyword>
<keyword id="KW-0548">Nucleotidyltransferase</keyword>
<keyword id="KW-1185">Reference proteome</keyword>
<keyword id="KW-0804">Transcription</keyword>
<keyword id="KW-0808">Transferase</keyword>
<reference key="1">
    <citation type="journal article" date="2006" name="Proc. Natl. Acad. Sci. U.S.A.">
        <title>Comparative genomics of the lactic acid bacteria.</title>
        <authorList>
            <person name="Makarova K.S."/>
            <person name="Slesarev A."/>
            <person name="Wolf Y.I."/>
            <person name="Sorokin A."/>
            <person name="Mirkin B."/>
            <person name="Koonin E.V."/>
            <person name="Pavlov A."/>
            <person name="Pavlova N."/>
            <person name="Karamychev V."/>
            <person name="Polouchine N."/>
            <person name="Shakhova V."/>
            <person name="Grigoriev I."/>
            <person name="Lou Y."/>
            <person name="Rohksar D."/>
            <person name="Lucas S."/>
            <person name="Huang K."/>
            <person name="Goodstein D.M."/>
            <person name="Hawkins T."/>
            <person name="Plengvidhya V."/>
            <person name="Welker D."/>
            <person name="Hughes J."/>
            <person name="Goh Y."/>
            <person name="Benson A."/>
            <person name="Baldwin K."/>
            <person name="Lee J.-H."/>
            <person name="Diaz-Muniz I."/>
            <person name="Dosti B."/>
            <person name="Smeianov V."/>
            <person name="Wechter W."/>
            <person name="Barabote R."/>
            <person name="Lorca G."/>
            <person name="Altermann E."/>
            <person name="Barrangou R."/>
            <person name="Ganesan B."/>
            <person name="Xie Y."/>
            <person name="Rawsthorne H."/>
            <person name="Tamir D."/>
            <person name="Parker C."/>
            <person name="Breidt F."/>
            <person name="Broadbent J.R."/>
            <person name="Hutkins R."/>
            <person name="O'Sullivan D."/>
            <person name="Steele J."/>
            <person name="Unlu G."/>
            <person name="Saier M.H. Jr."/>
            <person name="Klaenhammer T."/>
            <person name="Richardson P."/>
            <person name="Kozyavkin S."/>
            <person name="Weimer B.C."/>
            <person name="Mills D.A."/>
        </authorList>
    </citation>
    <scope>NUCLEOTIDE SEQUENCE [LARGE SCALE GENOMIC DNA]</scope>
    <source>
        <strain>ATCC 367 / BCRC 12310 / CIP 105137 / JCM 1170 / LMG 11437 / NCIMB 947 / NCTC 947</strain>
    </source>
</reference>
<sequence>MLLYPSVDDLLAQVDSRYSLIMLASKRAHELDAGSKPLLTDYKSPKTIGRALEEIAAGALMIDPDEKDLDA</sequence>
<feature type="chain" id="PRO_1000121235" description="DNA-directed RNA polymerase subunit omega">
    <location>
        <begin position="1"/>
        <end position="71"/>
    </location>
</feature>
<comment type="function">
    <text evidence="1">Promotes RNA polymerase assembly. Latches the N- and C-terminal regions of the beta' subunit thereby facilitating its interaction with the beta and alpha subunits.</text>
</comment>
<comment type="catalytic activity">
    <reaction evidence="1">
        <text>RNA(n) + a ribonucleoside 5'-triphosphate = RNA(n+1) + diphosphate</text>
        <dbReference type="Rhea" id="RHEA:21248"/>
        <dbReference type="Rhea" id="RHEA-COMP:14527"/>
        <dbReference type="Rhea" id="RHEA-COMP:17342"/>
        <dbReference type="ChEBI" id="CHEBI:33019"/>
        <dbReference type="ChEBI" id="CHEBI:61557"/>
        <dbReference type="ChEBI" id="CHEBI:140395"/>
        <dbReference type="EC" id="2.7.7.6"/>
    </reaction>
</comment>
<comment type="subunit">
    <text evidence="1">The RNAP catalytic core consists of 2 alpha, 1 beta, 1 beta' and 1 omega subunit. When a sigma factor is associated with the core the holoenzyme is formed, which can initiate transcription.</text>
</comment>
<comment type="similarity">
    <text evidence="1">Belongs to the RNA polymerase subunit omega family.</text>
</comment>
<dbReference type="EC" id="2.7.7.6" evidence="1"/>
<dbReference type="EMBL" id="CP000416">
    <property type="protein sequence ID" value="ABJ64102.1"/>
    <property type="molecule type" value="Genomic_DNA"/>
</dbReference>
<dbReference type="RefSeq" id="WP_011667692.1">
    <property type="nucleotide sequence ID" value="NC_008497.1"/>
</dbReference>
<dbReference type="SMR" id="Q03RS0"/>
<dbReference type="STRING" id="387344.LVIS_0968"/>
<dbReference type="GeneID" id="56992812"/>
<dbReference type="KEGG" id="lbr:LVIS_0968"/>
<dbReference type="eggNOG" id="COG1758">
    <property type="taxonomic scope" value="Bacteria"/>
</dbReference>
<dbReference type="HOGENOM" id="CLU_125406_6_0_9"/>
<dbReference type="Proteomes" id="UP000001652">
    <property type="component" value="Chromosome"/>
</dbReference>
<dbReference type="GO" id="GO:0000428">
    <property type="term" value="C:DNA-directed RNA polymerase complex"/>
    <property type="evidence" value="ECO:0007669"/>
    <property type="project" value="UniProtKB-KW"/>
</dbReference>
<dbReference type="GO" id="GO:0003677">
    <property type="term" value="F:DNA binding"/>
    <property type="evidence" value="ECO:0007669"/>
    <property type="project" value="UniProtKB-UniRule"/>
</dbReference>
<dbReference type="GO" id="GO:0003899">
    <property type="term" value="F:DNA-directed RNA polymerase activity"/>
    <property type="evidence" value="ECO:0007669"/>
    <property type="project" value="UniProtKB-UniRule"/>
</dbReference>
<dbReference type="GO" id="GO:0006351">
    <property type="term" value="P:DNA-templated transcription"/>
    <property type="evidence" value="ECO:0007669"/>
    <property type="project" value="UniProtKB-UniRule"/>
</dbReference>
<dbReference type="Gene3D" id="3.90.940.10">
    <property type="match status" value="1"/>
</dbReference>
<dbReference type="HAMAP" id="MF_00366">
    <property type="entry name" value="RNApol_bact_RpoZ"/>
    <property type="match status" value="1"/>
</dbReference>
<dbReference type="InterPro" id="IPR003716">
    <property type="entry name" value="DNA-dir_RNA_pol_omega"/>
</dbReference>
<dbReference type="InterPro" id="IPR006110">
    <property type="entry name" value="Pol_omega/Rpo6/RPB6"/>
</dbReference>
<dbReference type="InterPro" id="IPR036161">
    <property type="entry name" value="RPB6/omega-like_sf"/>
</dbReference>
<dbReference type="NCBIfam" id="TIGR00690">
    <property type="entry name" value="rpoZ"/>
    <property type="match status" value="1"/>
</dbReference>
<dbReference type="PANTHER" id="PTHR34476">
    <property type="entry name" value="DNA-DIRECTED RNA POLYMERASE SUBUNIT OMEGA"/>
    <property type="match status" value="1"/>
</dbReference>
<dbReference type="PANTHER" id="PTHR34476:SF1">
    <property type="entry name" value="DNA-DIRECTED RNA POLYMERASE SUBUNIT OMEGA"/>
    <property type="match status" value="1"/>
</dbReference>
<dbReference type="Pfam" id="PF01192">
    <property type="entry name" value="RNA_pol_Rpb6"/>
    <property type="match status" value="1"/>
</dbReference>
<dbReference type="SMART" id="SM01409">
    <property type="entry name" value="RNA_pol_Rpb6"/>
    <property type="match status" value="1"/>
</dbReference>
<dbReference type="SUPFAM" id="SSF63562">
    <property type="entry name" value="RPB6/omega subunit-like"/>
    <property type="match status" value="1"/>
</dbReference>
<gene>
    <name evidence="1" type="primary">rpoZ</name>
    <name type="ordered locus">LVIS_0968</name>
</gene>
<evidence type="ECO:0000255" key="1">
    <source>
        <dbReference type="HAMAP-Rule" id="MF_00366"/>
    </source>
</evidence>
<accession>Q03RS0</accession>